<gene>
    <name evidence="1" type="primary">ruvB</name>
    <name type="ordered locus">NMA1412</name>
</gene>
<protein>
    <recommendedName>
        <fullName evidence="1">Holliday junction branch migration complex subunit RuvB</fullName>
        <ecNumber evidence="1">3.6.4.-</ecNumber>
    </recommendedName>
</protein>
<evidence type="ECO:0000255" key="1">
    <source>
        <dbReference type="HAMAP-Rule" id="MF_00016"/>
    </source>
</evidence>
<dbReference type="EC" id="3.6.4.-" evidence="1"/>
<dbReference type="EMBL" id="AL157959">
    <property type="protein sequence ID" value="CAM08578.1"/>
    <property type="molecule type" value="Genomic_DNA"/>
</dbReference>
<dbReference type="PIR" id="E81910">
    <property type="entry name" value="E81910"/>
</dbReference>
<dbReference type="RefSeq" id="WP_002235823.1">
    <property type="nucleotide sequence ID" value="NC_003116.1"/>
</dbReference>
<dbReference type="SMR" id="Q9JUB0"/>
<dbReference type="EnsemblBacteria" id="CAM08578">
    <property type="protein sequence ID" value="CAM08578"/>
    <property type="gene ID" value="NMA1412"/>
</dbReference>
<dbReference type="GeneID" id="93385988"/>
<dbReference type="KEGG" id="nma:NMA1412"/>
<dbReference type="HOGENOM" id="CLU_055599_1_0_4"/>
<dbReference type="Proteomes" id="UP000000626">
    <property type="component" value="Chromosome"/>
</dbReference>
<dbReference type="GO" id="GO:0005737">
    <property type="term" value="C:cytoplasm"/>
    <property type="evidence" value="ECO:0007669"/>
    <property type="project" value="UniProtKB-SubCell"/>
</dbReference>
<dbReference type="GO" id="GO:0048476">
    <property type="term" value="C:Holliday junction resolvase complex"/>
    <property type="evidence" value="ECO:0007669"/>
    <property type="project" value="UniProtKB-UniRule"/>
</dbReference>
<dbReference type="GO" id="GO:0005524">
    <property type="term" value="F:ATP binding"/>
    <property type="evidence" value="ECO:0007669"/>
    <property type="project" value="UniProtKB-UniRule"/>
</dbReference>
<dbReference type="GO" id="GO:0016887">
    <property type="term" value="F:ATP hydrolysis activity"/>
    <property type="evidence" value="ECO:0007669"/>
    <property type="project" value="InterPro"/>
</dbReference>
<dbReference type="GO" id="GO:0000400">
    <property type="term" value="F:four-way junction DNA binding"/>
    <property type="evidence" value="ECO:0007669"/>
    <property type="project" value="UniProtKB-UniRule"/>
</dbReference>
<dbReference type="GO" id="GO:0009378">
    <property type="term" value="F:four-way junction helicase activity"/>
    <property type="evidence" value="ECO:0007669"/>
    <property type="project" value="InterPro"/>
</dbReference>
<dbReference type="GO" id="GO:0006310">
    <property type="term" value="P:DNA recombination"/>
    <property type="evidence" value="ECO:0007669"/>
    <property type="project" value="UniProtKB-UniRule"/>
</dbReference>
<dbReference type="GO" id="GO:0006281">
    <property type="term" value="P:DNA repair"/>
    <property type="evidence" value="ECO:0007669"/>
    <property type="project" value="UniProtKB-UniRule"/>
</dbReference>
<dbReference type="CDD" id="cd00009">
    <property type="entry name" value="AAA"/>
    <property type="match status" value="1"/>
</dbReference>
<dbReference type="FunFam" id="1.10.10.10:FF:000086">
    <property type="entry name" value="Holliday junction ATP-dependent DNA helicase RuvB"/>
    <property type="match status" value="1"/>
</dbReference>
<dbReference type="FunFam" id="1.10.8.60:FF:000023">
    <property type="entry name" value="Holliday junction ATP-dependent DNA helicase RuvB"/>
    <property type="match status" value="1"/>
</dbReference>
<dbReference type="FunFam" id="3.40.50.300:FF:000073">
    <property type="entry name" value="Holliday junction ATP-dependent DNA helicase RuvB"/>
    <property type="match status" value="1"/>
</dbReference>
<dbReference type="Gene3D" id="1.10.8.60">
    <property type="match status" value="1"/>
</dbReference>
<dbReference type="Gene3D" id="3.40.50.300">
    <property type="entry name" value="P-loop containing nucleotide triphosphate hydrolases"/>
    <property type="match status" value="1"/>
</dbReference>
<dbReference type="Gene3D" id="1.10.10.10">
    <property type="entry name" value="Winged helix-like DNA-binding domain superfamily/Winged helix DNA-binding domain"/>
    <property type="match status" value="1"/>
</dbReference>
<dbReference type="HAMAP" id="MF_00016">
    <property type="entry name" value="DNA_HJ_migration_RuvB"/>
    <property type="match status" value="1"/>
</dbReference>
<dbReference type="InterPro" id="IPR003593">
    <property type="entry name" value="AAA+_ATPase"/>
</dbReference>
<dbReference type="InterPro" id="IPR041445">
    <property type="entry name" value="AAA_lid_4"/>
</dbReference>
<dbReference type="InterPro" id="IPR004605">
    <property type="entry name" value="DNA_helicase_Holl-junc_RuvB"/>
</dbReference>
<dbReference type="InterPro" id="IPR027417">
    <property type="entry name" value="P-loop_NTPase"/>
</dbReference>
<dbReference type="InterPro" id="IPR008824">
    <property type="entry name" value="RuvB-like_N"/>
</dbReference>
<dbReference type="InterPro" id="IPR008823">
    <property type="entry name" value="RuvB_C"/>
</dbReference>
<dbReference type="InterPro" id="IPR036388">
    <property type="entry name" value="WH-like_DNA-bd_sf"/>
</dbReference>
<dbReference type="InterPro" id="IPR036390">
    <property type="entry name" value="WH_DNA-bd_sf"/>
</dbReference>
<dbReference type="NCBIfam" id="NF000868">
    <property type="entry name" value="PRK00080.1"/>
    <property type="match status" value="1"/>
</dbReference>
<dbReference type="NCBIfam" id="TIGR00635">
    <property type="entry name" value="ruvB"/>
    <property type="match status" value="1"/>
</dbReference>
<dbReference type="PANTHER" id="PTHR42848">
    <property type="match status" value="1"/>
</dbReference>
<dbReference type="PANTHER" id="PTHR42848:SF1">
    <property type="entry name" value="HOLLIDAY JUNCTION BRANCH MIGRATION COMPLEX SUBUNIT RUVB"/>
    <property type="match status" value="1"/>
</dbReference>
<dbReference type="Pfam" id="PF17864">
    <property type="entry name" value="AAA_lid_4"/>
    <property type="match status" value="1"/>
</dbReference>
<dbReference type="Pfam" id="PF05491">
    <property type="entry name" value="RuvB_C"/>
    <property type="match status" value="1"/>
</dbReference>
<dbReference type="Pfam" id="PF05496">
    <property type="entry name" value="RuvB_N"/>
    <property type="match status" value="1"/>
</dbReference>
<dbReference type="SMART" id="SM00382">
    <property type="entry name" value="AAA"/>
    <property type="match status" value="1"/>
</dbReference>
<dbReference type="SUPFAM" id="SSF52540">
    <property type="entry name" value="P-loop containing nucleoside triphosphate hydrolases"/>
    <property type="match status" value="1"/>
</dbReference>
<dbReference type="SUPFAM" id="SSF46785">
    <property type="entry name" value="Winged helix' DNA-binding domain"/>
    <property type="match status" value="1"/>
</dbReference>
<feature type="chain" id="PRO_0000165564" description="Holliday junction branch migration complex subunit RuvB">
    <location>
        <begin position="1"/>
        <end position="343"/>
    </location>
</feature>
<feature type="region of interest" description="Large ATPase domain (RuvB-L)" evidence="1">
    <location>
        <begin position="4"/>
        <end position="193"/>
    </location>
</feature>
<feature type="region of interest" description="Small ATPAse domain (RuvB-S)" evidence="1">
    <location>
        <begin position="194"/>
        <end position="264"/>
    </location>
</feature>
<feature type="region of interest" description="Head domain (RuvB-H)" evidence="1">
    <location>
        <begin position="267"/>
        <end position="343"/>
    </location>
</feature>
<feature type="binding site" evidence="1">
    <location>
        <position position="32"/>
    </location>
    <ligand>
        <name>ATP</name>
        <dbReference type="ChEBI" id="CHEBI:30616"/>
    </ligand>
</feature>
<feature type="binding site" evidence="1">
    <location>
        <position position="33"/>
    </location>
    <ligand>
        <name>ATP</name>
        <dbReference type="ChEBI" id="CHEBI:30616"/>
    </ligand>
</feature>
<feature type="binding site" evidence="1">
    <location>
        <position position="74"/>
    </location>
    <ligand>
        <name>ATP</name>
        <dbReference type="ChEBI" id="CHEBI:30616"/>
    </ligand>
</feature>
<feature type="binding site" evidence="1">
    <location>
        <position position="77"/>
    </location>
    <ligand>
        <name>ATP</name>
        <dbReference type="ChEBI" id="CHEBI:30616"/>
    </ligand>
</feature>
<feature type="binding site" evidence="1">
    <location>
        <position position="78"/>
    </location>
    <ligand>
        <name>ATP</name>
        <dbReference type="ChEBI" id="CHEBI:30616"/>
    </ligand>
</feature>
<feature type="binding site" evidence="1">
    <location>
        <position position="78"/>
    </location>
    <ligand>
        <name>Mg(2+)</name>
        <dbReference type="ChEBI" id="CHEBI:18420"/>
    </ligand>
</feature>
<feature type="binding site" evidence="1">
    <location>
        <position position="79"/>
    </location>
    <ligand>
        <name>ATP</name>
        <dbReference type="ChEBI" id="CHEBI:30616"/>
    </ligand>
</feature>
<feature type="binding site" evidence="1">
    <location>
        <begin position="140"/>
        <end position="142"/>
    </location>
    <ligand>
        <name>ATP</name>
        <dbReference type="ChEBI" id="CHEBI:30616"/>
    </ligand>
</feature>
<feature type="binding site" evidence="1">
    <location>
        <position position="183"/>
    </location>
    <ligand>
        <name>ATP</name>
        <dbReference type="ChEBI" id="CHEBI:30616"/>
    </ligand>
</feature>
<feature type="binding site" evidence="1">
    <location>
        <position position="193"/>
    </location>
    <ligand>
        <name>ATP</name>
        <dbReference type="ChEBI" id="CHEBI:30616"/>
    </ligand>
</feature>
<feature type="binding site" evidence="1">
    <location>
        <position position="230"/>
    </location>
    <ligand>
        <name>ATP</name>
        <dbReference type="ChEBI" id="CHEBI:30616"/>
    </ligand>
</feature>
<feature type="binding site" evidence="1">
    <location>
        <position position="322"/>
    </location>
    <ligand>
        <name>DNA</name>
        <dbReference type="ChEBI" id="CHEBI:16991"/>
    </ligand>
</feature>
<feature type="binding site" evidence="1">
    <location>
        <position position="327"/>
    </location>
    <ligand>
        <name>DNA</name>
        <dbReference type="ChEBI" id="CHEBI:16991"/>
    </ligand>
</feature>
<accession>Q9JUB0</accession>
<accession>A1IS28</accession>
<proteinExistence type="inferred from homology"/>
<reference key="1">
    <citation type="journal article" date="2000" name="Nature">
        <title>Complete DNA sequence of a serogroup A strain of Neisseria meningitidis Z2491.</title>
        <authorList>
            <person name="Parkhill J."/>
            <person name="Achtman M."/>
            <person name="James K.D."/>
            <person name="Bentley S.D."/>
            <person name="Churcher C.M."/>
            <person name="Klee S.R."/>
            <person name="Morelli G."/>
            <person name="Basham D."/>
            <person name="Brown D."/>
            <person name="Chillingworth T."/>
            <person name="Davies R.M."/>
            <person name="Davis P."/>
            <person name="Devlin K."/>
            <person name="Feltwell T."/>
            <person name="Hamlin N."/>
            <person name="Holroyd S."/>
            <person name="Jagels K."/>
            <person name="Leather S."/>
            <person name="Moule S."/>
            <person name="Mungall K.L."/>
            <person name="Quail M.A."/>
            <person name="Rajandream M.A."/>
            <person name="Rutherford K.M."/>
            <person name="Simmonds M."/>
            <person name="Skelton J."/>
            <person name="Whitehead S."/>
            <person name="Spratt B.G."/>
            <person name="Barrell B.G."/>
        </authorList>
    </citation>
    <scope>NUCLEOTIDE SEQUENCE [LARGE SCALE GENOMIC DNA]</scope>
    <source>
        <strain>DSM 15465 / Z2491</strain>
    </source>
</reference>
<keyword id="KW-0067">ATP-binding</keyword>
<keyword id="KW-0963">Cytoplasm</keyword>
<keyword id="KW-0227">DNA damage</keyword>
<keyword id="KW-0233">DNA recombination</keyword>
<keyword id="KW-0234">DNA repair</keyword>
<keyword id="KW-0238">DNA-binding</keyword>
<keyword id="KW-0378">Hydrolase</keyword>
<keyword id="KW-0547">Nucleotide-binding</keyword>
<name>RUVB_NEIMA</name>
<comment type="function">
    <text evidence="1">The RuvA-RuvB-RuvC complex processes Holliday junction (HJ) DNA during genetic recombination and DNA repair, while the RuvA-RuvB complex plays an important role in the rescue of blocked DNA replication forks via replication fork reversal (RFR). RuvA specifically binds to HJ cruciform DNA, conferring on it an open structure. The RuvB hexamer acts as an ATP-dependent pump, pulling dsDNA into and through the RuvAB complex. RuvB forms 2 homohexamers on either side of HJ DNA bound by 1 or 2 RuvA tetramers; 4 subunits per hexamer contact DNA at a time. Coordinated motions by a converter formed by DNA-disengaged RuvB subunits stimulates ATP hydrolysis and nucleotide exchange. Immobilization of the converter enables RuvB to convert the ATP-contained energy into a lever motion, pulling 2 nucleotides of DNA out of the RuvA tetramer per ATP hydrolyzed, thus driving DNA branch migration. The RuvB motors rotate together with the DNA substrate, which together with the progressing nucleotide cycle form the mechanistic basis for DNA recombination by continuous HJ branch migration. Branch migration allows RuvC to scan DNA until it finds its consensus sequence, where it cleaves and resolves cruciform DNA.</text>
</comment>
<comment type="catalytic activity">
    <reaction evidence="1">
        <text>ATP + H2O = ADP + phosphate + H(+)</text>
        <dbReference type="Rhea" id="RHEA:13065"/>
        <dbReference type="ChEBI" id="CHEBI:15377"/>
        <dbReference type="ChEBI" id="CHEBI:15378"/>
        <dbReference type="ChEBI" id="CHEBI:30616"/>
        <dbReference type="ChEBI" id="CHEBI:43474"/>
        <dbReference type="ChEBI" id="CHEBI:456216"/>
    </reaction>
</comment>
<comment type="subunit">
    <text evidence="1">Homohexamer. Forms an RuvA(8)-RuvB(12)-Holliday junction (HJ) complex. HJ DNA is sandwiched between 2 RuvA tetramers; dsDNA enters through RuvA and exits via RuvB. An RuvB hexamer assembles on each DNA strand where it exits the tetramer. Each RuvB hexamer is contacted by two RuvA subunits (via domain III) on 2 adjacent RuvB subunits; this complex drives branch migration. In the full resolvosome a probable DNA-RuvA(4)-RuvB(12)-RuvC(2) complex forms which resolves the HJ.</text>
</comment>
<comment type="subcellular location">
    <subcellularLocation>
        <location evidence="1">Cytoplasm</location>
    </subcellularLocation>
</comment>
<comment type="domain">
    <text evidence="1">Has 3 domains, the large (RuvB-L) and small ATPase (RuvB-S) domains and the C-terminal head (RuvB-H) domain. The head domain binds DNA, while the ATPase domains jointly bind ATP, ADP or are empty depending on the state of the subunit in the translocation cycle. During a single DNA translocation step the structure of each domain remains the same, but their relative positions change.</text>
</comment>
<comment type="similarity">
    <text evidence="1">Belongs to the RuvB family.</text>
</comment>
<organism>
    <name type="scientific">Neisseria meningitidis serogroup A / serotype 4A (strain DSM 15465 / Z2491)</name>
    <dbReference type="NCBI Taxonomy" id="122587"/>
    <lineage>
        <taxon>Bacteria</taxon>
        <taxon>Pseudomonadati</taxon>
        <taxon>Pseudomonadota</taxon>
        <taxon>Betaproteobacteria</taxon>
        <taxon>Neisseriales</taxon>
        <taxon>Neisseriaceae</taxon>
        <taxon>Neisseria</taxon>
    </lineage>
</organism>
<sequence length="343" mass="37666">MLQTDNLTAAQPQRIVAAQTASAQEELLERALRPKTLDDYIGQHKAKEQLAIFIQAAKKRGEALDHVLLFGPPGLGKTTLAHIIAKELGVNLRQTSGPVLERAGDLAALLTNLDPHDVLFIDEIHRLSPVVEEILYPALEDYRLDIMIGEGPAARSVKIDLPPFTLVGATTRAGMLTNPLRDRFGIVSRLEFYENRDLATIVSRSAQLLQLDMSEEGAEEIAKRSRGTPRIANRLLRRVRDFADVKNNGTIDGGIADAALSMLDVDVQGLDVMDRKFLEAVLHKFGGGPVGLDNVAAAIGESTDTIEDVIEPYLIQQGFLQRTPRGRMATERAYLHFGLPVEK</sequence>